<accession>Q9R9U2</accession>
<keyword id="KW-0067">ATP-binding</keyword>
<keyword id="KW-0963">Cytoplasm</keyword>
<keyword id="KW-0227">DNA damage</keyword>
<keyword id="KW-0233">DNA recombination</keyword>
<keyword id="KW-0234">DNA repair</keyword>
<keyword id="KW-0238">DNA-binding</keyword>
<keyword id="KW-0547">Nucleotide-binding</keyword>
<keyword id="KW-0614">Plasmid</keyword>
<keyword id="KW-0742">SOS response</keyword>
<comment type="function">
    <text evidence="1">Can catalyze the hydrolysis of ATP in the presence of single-stranded DNA, the ATP-dependent uptake of single-stranded DNA by duplex DNA, and the ATP-dependent hybridization of homologous single-stranded DNAs. It interacts with LexA causing its activation and leading to its autocatalytic cleavage.</text>
</comment>
<comment type="subcellular location">
    <subcellularLocation>
        <location evidence="1">Cytoplasm</location>
    </subcellularLocation>
</comment>
<comment type="similarity">
    <text evidence="1">Belongs to the RecA family.</text>
</comment>
<proteinExistence type="inferred from homology"/>
<geneLocation type="plasmid">
    <name>OCT</name>
</geneLocation>
<name>RECA_ECTOL</name>
<reference key="1">
    <citation type="submission" date="1999-07" db="EMBL/GenBank/DDBJ databases">
        <title>Organization of Pseudomonas oleovorans GPo1 and Pseudomonas putida P1 genes involved in alkane oxidation.</title>
        <authorList>
            <person name="Van Beilen J.B."/>
            <person name="Roethlisberger M."/>
            <person name="Witholt B."/>
        </authorList>
    </citation>
    <scope>NUCLEOTIDE SEQUENCE [GENOMIC DNA]</scope>
    <source>
        <strain>TF4-1L / GPo1</strain>
    </source>
</reference>
<dbReference type="EMBL" id="AJ245436">
    <property type="protein sequence ID" value="CAB54066.1"/>
    <property type="molecule type" value="Genomic_DNA"/>
</dbReference>
<dbReference type="SMR" id="Q9R9U2"/>
<dbReference type="STRING" id="301.SAMN05216280_100852"/>
<dbReference type="GO" id="GO:0005829">
    <property type="term" value="C:cytosol"/>
    <property type="evidence" value="ECO:0007669"/>
    <property type="project" value="TreeGrafter"/>
</dbReference>
<dbReference type="GO" id="GO:0005524">
    <property type="term" value="F:ATP binding"/>
    <property type="evidence" value="ECO:0007669"/>
    <property type="project" value="UniProtKB-UniRule"/>
</dbReference>
<dbReference type="GO" id="GO:0016887">
    <property type="term" value="F:ATP hydrolysis activity"/>
    <property type="evidence" value="ECO:0007669"/>
    <property type="project" value="InterPro"/>
</dbReference>
<dbReference type="GO" id="GO:0140664">
    <property type="term" value="F:ATP-dependent DNA damage sensor activity"/>
    <property type="evidence" value="ECO:0007669"/>
    <property type="project" value="InterPro"/>
</dbReference>
<dbReference type="GO" id="GO:0003684">
    <property type="term" value="F:damaged DNA binding"/>
    <property type="evidence" value="ECO:0007669"/>
    <property type="project" value="UniProtKB-UniRule"/>
</dbReference>
<dbReference type="GO" id="GO:0003697">
    <property type="term" value="F:single-stranded DNA binding"/>
    <property type="evidence" value="ECO:0007669"/>
    <property type="project" value="UniProtKB-UniRule"/>
</dbReference>
<dbReference type="GO" id="GO:0006310">
    <property type="term" value="P:DNA recombination"/>
    <property type="evidence" value="ECO:0007669"/>
    <property type="project" value="UniProtKB-UniRule"/>
</dbReference>
<dbReference type="GO" id="GO:0006281">
    <property type="term" value="P:DNA repair"/>
    <property type="evidence" value="ECO:0007669"/>
    <property type="project" value="UniProtKB-UniRule"/>
</dbReference>
<dbReference type="GO" id="GO:0009432">
    <property type="term" value="P:SOS response"/>
    <property type="evidence" value="ECO:0007669"/>
    <property type="project" value="UniProtKB-UniRule"/>
</dbReference>
<dbReference type="CDD" id="cd00983">
    <property type="entry name" value="RecA"/>
    <property type="match status" value="1"/>
</dbReference>
<dbReference type="FunFam" id="3.40.50.300:FF:000087">
    <property type="entry name" value="Recombinase RecA"/>
    <property type="match status" value="1"/>
</dbReference>
<dbReference type="Gene3D" id="3.40.50.300">
    <property type="entry name" value="P-loop containing nucleotide triphosphate hydrolases"/>
    <property type="match status" value="1"/>
</dbReference>
<dbReference type="HAMAP" id="MF_00268">
    <property type="entry name" value="RecA"/>
    <property type="match status" value="1"/>
</dbReference>
<dbReference type="InterPro" id="IPR003593">
    <property type="entry name" value="AAA+_ATPase"/>
</dbReference>
<dbReference type="InterPro" id="IPR013765">
    <property type="entry name" value="DNA_recomb/repair_RecA"/>
</dbReference>
<dbReference type="InterPro" id="IPR020584">
    <property type="entry name" value="DNA_recomb/repair_RecA_CS"/>
</dbReference>
<dbReference type="InterPro" id="IPR027417">
    <property type="entry name" value="P-loop_NTPase"/>
</dbReference>
<dbReference type="InterPro" id="IPR049261">
    <property type="entry name" value="RecA-like_C"/>
</dbReference>
<dbReference type="InterPro" id="IPR049428">
    <property type="entry name" value="RecA-like_N"/>
</dbReference>
<dbReference type="InterPro" id="IPR020588">
    <property type="entry name" value="RecA_ATP-bd"/>
</dbReference>
<dbReference type="InterPro" id="IPR023400">
    <property type="entry name" value="RecA_C_sf"/>
</dbReference>
<dbReference type="InterPro" id="IPR020587">
    <property type="entry name" value="RecA_monomer-monomer_interface"/>
</dbReference>
<dbReference type="NCBIfam" id="TIGR02012">
    <property type="entry name" value="tigrfam_recA"/>
    <property type="match status" value="1"/>
</dbReference>
<dbReference type="PANTHER" id="PTHR45900:SF1">
    <property type="entry name" value="MITOCHONDRIAL DNA REPAIR PROTEIN RECA HOMOLOG-RELATED"/>
    <property type="match status" value="1"/>
</dbReference>
<dbReference type="PANTHER" id="PTHR45900">
    <property type="entry name" value="RECA"/>
    <property type="match status" value="1"/>
</dbReference>
<dbReference type="Pfam" id="PF00154">
    <property type="entry name" value="RecA"/>
    <property type="match status" value="1"/>
</dbReference>
<dbReference type="Pfam" id="PF21096">
    <property type="entry name" value="RecA_C"/>
    <property type="match status" value="1"/>
</dbReference>
<dbReference type="PRINTS" id="PR00142">
    <property type="entry name" value="RECA"/>
</dbReference>
<dbReference type="SMART" id="SM00382">
    <property type="entry name" value="AAA"/>
    <property type="match status" value="1"/>
</dbReference>
<dbReference type="SUPFAM" id="SSF52540">
    <property type="entry name" value="P-loop containing nucleoside triphosphate hydrolases"/>
    <property type="match status" value="1"/>
</dbReference>
<dbReference type="SUPFAM" id="SSF54752">
    <property type="entry name" value="RecA protein, C-terminal domain"/>
    <property type="match status" value="1"/>
</dbReference>
<dbReference type="PROSITE" id="PS00321">
    <property type="entry name" value="RECA_1"/>
    <property type="match status" value="1"/>
</dbReference>
<dbReference type="PROSITE" id="PS50162">
    <property type="entry name" value="RECA_2"/>
    <property type="match status" value="1"/>
</dbReference>
<dbReference type="PROSITE" id="PS50163">
    <property type="entry name" value="RECA_3"/>
    <property type="match status" value="1"/>
</dbReference>
<protein>
    <recommendedName>
        <fullName evidence="1">Protein RecA</fullName>
    </recommendedName>
    <alternativeName>
        <fullName evidence="1">Recombinase A</fullName>
    </alternativeName>
</protein>
<gene>
    <name evidence="1" type="primary">recA</name>
</gene>
<sequence>MDQAKSKALEAALSQIEKQFGKGSIMRLGSDRTMDIDVISTGSLGLDIALGVGGLPRGRIVEIYGPESSGKTTLTLSVIAEAQRQGLTCAFVDAEHALDPIYAAKLGVNIDELLCSQPDTGEQALEIVDILTRSGAVNLIVVDSVAALVPKAEIEGEIGDSHVGLAARMMSQAMRKITGNLKNSNTMCIFINQIRMKIGVMFGNPETTTGGNALKFYASVRLDIRRTGAVKEGEEVVGSETRVKVVKNKVAAPFRQAEFQIVYGQGISKAGEIVDLAVANNFVEKSGAWYSFEGNKIGQGKANTMKWLLENKPTMDKLEGMIREKLMSKPQAETSARLATQEELADDY</sequence>
<feature type="chain" id="PRO_0000122804" description="Protein RecA">
    <location>
        <begin position="1"/>
        <end position="348"/>
    </location>
</feature>
<feature type="region of interest" description="Disordered" evidence="2">
    <location>
        <begin position="328"/>
        <end position="348"/>
    </location>
</feature>
<feature type="binding site" evidence="1">
    <location>
        <begin position="65"/>
        <end position="72"/>
    </location>
    <ligand>
        <name>ATP</name>
        <dbReference type="ChEBI" id="CHEBI:30616"/>
    </ligand>
</feature>
<evidence type="ECO:0000255" key="1">
    <source>
        <dbReference type="HAMAP-Rule" id="MF_00268"/>
    </source>
</evidence>
<evidence type="ECO:0000256" key="2">
    <source>
        <dbReference type="SAM" id="MobiDB-lite"/>
    </source>
</evidence>
<organism>
    <name type="scientific">Ectopseudomonas oleovorans</name>
    <name type="common">Pseudomonas oleovorans</name>
    <dbReference type="NCBI Taxonomy" id="301"/>
    <lineage>
        <taxon>Bacteria</taxon>
        <taxon>Pseudomonadati</taxon>
        <taxon>Pseudomonadota</taxon>
        <taxon>Gammaproteobacteria</taxon>
        <taxon>Pseudomonadales</taxon>
        <taxon>Pseudomonadaceae</taxon>
        <taxon>Ectopseudomonas</taxon>
    </lineage>
</organism>